<comment type="function">
    <text evidence="1">Component of the proteasome core, a large protease complex with broad specificity involved in protein degradation.</text>
</comment>
<comment type="activity regulation">
    <text evidence="1">The formation of the proteasomal ATPase ARC-20S proteasome complex, likely via the docking of the C-termini of ARC into the intersubunit pockets in the alpha-rings, may trigger opening of the gate for substrate entry. Interconversion between the open-gate and close-gate conformations leads to a dynamic regulation of the 20S proteasome proteolysis activity.</text>
</comment>
<comment type="pathway">
    <text evidence="1">Protein degradation; proteasomal Pup-dependent pathway.</text>
</comment>
<comment type="subunit">
    <text evidence="1">The 20S proteasome core is composed of 14 alpha and 14 beta subunits that assemble into four stacked heptameric rings, resulting in a barrel-shaped structure. The two inner rings, each composed of seven catalytic beta subunits, are sandwiched by two outer rings, each composed of seven alpha subunits. The catalytic chamber with the active sites is on the inside of the barrel. Has a gated structure, the ends of the cylinder being occluded by the N-termini of the alpha-subunits. Is capped by the proteasome-associated ATPase, ARC.</text>
</comment>
<comment type="subcellular location">
    <subcellularLocation>
        <location evidence="1">Cytoplasm</location>
    </subcellularLocation>
</comment>
<comment type="similarity">
    <text evidence="1">Belongs to the peptidase T1A family.</text>
</comment>
<protein>
    <recommendedName>
        <fullName evidence="1">Proteasome subunit alpha</fullName>
    </recommendedName>
    <alternativeName>
        <fullName evidence="1">20S proteasome alpha subunit</fullName>
    </alternativeName>
    <alternativeName>
        <fullName evidence="1">Proteasome core protein PrcA</fullName>
    </alternativeName>
</protein>
<gene>
    <name evidence="1" type="primary">prcA</name>
    <name type="ordered locus">RHA1_ro00843</name>
</gene>
<organism>
    <name type="scientific">Rhodococcus jostii (strain RHA1)</name>
    <dbReference type="NCBI Taxonomy" id="101510"/>
    <lineage>
        <taxon>Bacteria</taxon>
        <taxon>Bacillati</taxon>
        <taxon>Actinomycetota</taxon>
        <taxon>Actinomycetes</taxon>
        <taxon>Mycobacteriales</taxon>
        <taxon>Nocardiaceae</taxon>
        <taxon>Rhodococcus</taxon>
    </lineage>
</organism>
<name>PSA_RHOJR</name>
<keyword id="KW-0963">Cytoplasm</keyword>
<keyword id="KW-0647">Proteasome</keyword>
<dbReference type="EMBL" id="CP000431">
    <property type="protein sequence ID" value="ABG92676.1"/>
    <property type="molecule type" value="Genomic_DNA"/>
</dbReference>
<dbReference type="RefSeq" id="WP_011594076.1">
    <property type="nucleotide sequence ID" value="NC_008268.1"/>
</dbReference>
<dbReference type="SMR" id="Q0SIG0"/>
<dbReference type="MEROPS" id="T01.980"/>
<dbReference type="KEGG" id="rha:RHA1_ro00843"/>
<dbReference type="PATRIC" id="fig|101510.16.peg.862"/>
<dbReference type="eggNOG" id="COG0638">
    <property type="taxonomic scope" value="Bacteria"/>
</dbReference>
<dbReference type="HOGENOM" id="CLU_071031_0_0_11"/>
<dbReference type="OrthoDB" id="9775643at2"/>
<dbReference type="UniPathway" id="UPA00997"/>
<dbReference type="Proteomes" id="UP000008710">
    <property type="component" value="Chromosome"/>
</dbReference>
<dbReference type="GO" id="GO:0005737">
    <property type="term" value="C:cytoplasm"/>
    <property type="evidence" value="ECO:0007669"/>
    <property type="project" value="UniProtKB-SubCell"/>
</dbReference>
<dbReference type="GO" id="GO:0019773">
    <property type="term" value="C:proteasome core complex, alpha-subunit complex"/>
    <property type="evidence" value="ECO:0007669"/>
    <property type="project" value="UniProtKB-UniRule"/>
</dbReference>
<dbReference type="GO" id="GO:0004298">
    <property type="term" value="F:threonine-type endopeptidase activity"/>
    <property type="evidence" value="ECO:0007669"/>
    <property type="project" value="InterPro"/>
</dbReference>
<dbReference type="GO" id="GO:0019941">
    <property type="term" value="P:modification-dependent protein catabolic process"/>
    <property type="evidence" value="ECO:0007669"/>
    <property type="project" value="UniProtKB-UniRule"/>
</dbReference>
<dbReference type="GO" id="GO:0010498">
    <property type="term" value="P:proteasomal protein catabolic process"/>
    <property type="evidence" value="ECO:0007669"/>
    <property type="project" value="UniProtKB-UniRule"/>
</dbReference>
<dbReference type="CDD" id="cd01901">
    <property type="entry name" value="Ntn_hydrolase"/>
    <property type="match status" value="1"/>
</dbReference>
<dbReference type="FunFam" id="3.60.20.10:FF:000023">
    <property type="entry name" value="Proteasome subunit alpha"/>
    <property type="match status" value="1"/>
</dbReference>
<dbReference type="Gene3D" id="3.60.20.10">
    <property type="entry name" value="Glutamine Phosphoribosylpyrophosphate, subunit 1, domain 1"/>
    <property type="match status" value="1"/>
</dbReference>
<dbReference type="HAMAP" id="MF_00289_B">
    <property type="entry name" value="Proteasome_A_B"/>
    <property type="match status" value="1"/>
</dbReference>
<dbReference type="InterPro" id="IPR029055">
    <property type="entry name" value="Ntn_hydrolases_N"/>
</dbReference>
<dbReference type="InterPro" id="IPR050115">
    <property type="entry name" value="Proteasome_alpha"/>
</dbReference>
<dbReference type="InterPro" id="IPR023332">
    <property type="entry name" value="Proteasome_alpha-type"/>
</dbReference>
<dbReference type="InterPro" id="IPR022296">
    <property type="entry name" value="Proteasome_asu_bac"/>
</dbReference>
<dbReference type="InterPro" id="IPR001353">
    <property type="entry name" value="Proteasome_sua/b"/>
</dbReference>
<dbReference type="NCBIfam" id="TIGR03691">
    <property type="entry name" value="20S_bact_alpha"/>
    <property type="match status" value="1"/>
</dbReference>
<dbReference type="PANTHER" id="PTHR11599">
    <property type="entry name" value="PROTEASOME SUBUNIT ALPHA/BETA"/>
    <property type="match status" value="1"/>
</dbReference>
<dbReference type="Pfam" id="PF00227">
    <property type="entry name" value="Proteasome"/>
    <property type="match status" value="1"/>
</dbReference>
<dbReference type="SUPFAM" id="SSF56235">
    <property type="entry name" value="N-terminal nucleophile aminohydrolases (Ntn hydrolases)"/>
    <property type="match status" value="1"/>
</dbReference>
<dbReference type="PROSITE" id="PS51475">
    <property type="entry name" value="PROTEASOME_ALPHA_2"/>
    <property type="match status" value="1"/>
</dbReference>
<accession>Q0SIG0</accession>
<proteinExistence type="inferred from homology"/>
<evidence type="ECO:0000255" key="1">
    <source>
        <dbReference type="HAMAP-Rule" id="MF_00289"/>
    </source>
</evidence>
<evidence type="ECO:0000256" key="2">
    <source>
        <dbReference type="SAM" id="MobiDB-lite"/>
    </source>
</evidence>
<feature type="chain" id="PRO_0000397169" description="Proteasome subunit alpha">
    <location>
        <begin position="1"/>
        <end position="259"/>
    </location>
</feature>
<feature type="region of interest" description="Disordered" evidence="2">
    <location>
        <begin position="222"/>
        <end position="259"/>
    </location>
</feature>
<feature type="compositionally biased region" description="Basic and acidic residues" evidence="2">
    <location>
        <begin position="244"/>
        <end position="259"/>
    </location>
</feature>
<reference key="1">
    <citation type="journal article" date="2006" name="Proc. Natl. Acad. Sci. U.S.A.">
        <title>The complete genome of Rhodococcus sp. RHA1 provides insights into a catabolic powerhouse.</title>
        <authorList>
            <person name="McLeod M.P."/>
            <person name="Warren R.L."/>
            <person name="Hsiao W.W.L."/>
            <person name="Araki N."/>
            <person name="Myhre M."/>
            <person name="Fernandes C."/>
            <person name="Miyazawa D."/>
            <person name="Wong W."/>
            <person name="Lillquist A.L."/>
            <person name="Wang D."/>
            <person name="Dosanjh M."/>
            <person name="Hara H."/>
            <person name="Petrescu A."/>
            <person name="Morin R.D."/>
            <person name="Yang G."/>
            <person name="Stott J.M."/>
            <person name="Schein J.E."/>
            <person name="Shin H."/>
            <person name="Smailus D."/>
            <person name="Siddiqui A.S."/>
            <person name="Marra M.A."/>
            <person name="Jones S.J.M."/>
            <person name="Holt R."/>
            <person name="Brinkman F.S.L."/>
            <person name="Miyauchi K."/>
            <person name="Fukuda M."/>
            <person name="Davies J.E."/>
            <person name="Mohn W.W."/>
            <person name="Eltis L.D."/>
        </authorList>
    </citation>
    <scope>NUCLEOTIDE SEQUENCE [LARGE SCALE GENOMIC DNA]</scope>
    <source>
        <strain>RHA1</strain>
    </source>
</reference>
<sequence>MTMPYYASAEQIMRDRSELARKGIARGRSVVVLTFRDGVLFVAENPSTALHKVSELYDRLGFAAVGKYNEFENLRRAGIVHADMRGYSYDRRDVTGRSLANAYAQTLGTIFTEQPKPYEVEICVAEVGRVGSPKAPQLYRITYDGSIVDEQHFVVMGGTTEPIATAMRESYRADLDLEAAVGIAVNALRQGGAGEGEKRNVDVASLEVAVLDQSRPRRAFRRITGPALEQLIPAEPAPASEPAPESKPDTETKPADPQD</sequence>